<name>LPXH_PSEU2</name>
<sequence>MILLISDLHLEQERPDITRAFLDLLAGRAREAESLYILGDFFEVWIGDDAMSPFQLSICKALRELSDSGTRIFLMHGNRDFMLGKGFCKAAGCTLLSDPSVVQLNGEPVLLMHGDSLCTRDEGYIRMRRYLRHPLTLFILRHLPLGTRHKLARKLRNESRAQTRMKANDIVDVTPDEVPRIMQQFGVRTLVHGHTHRPAIHKLQIGDQAARRIVLGDWDRQGWVLQVDEQGFNLSSFDFVPETVALLN</sequence>
<accession>Q4ZVP2</accession>
<evidence type="ECO:0000255" key="1">
    <source>
        <dbReference type="HAMAP-Rule" id="MF_00575"/>
    </source>
</evidence>
<organism>
    <name type="scientific">Pseudomonas syringae pv. syringae (strain B728a)</name>
    <dbReference type="NCBI Taxonomy" id="205918"/>
    <lineage>
        <taxon>Bacteria</taxon>
        <taxon>Pseudomonadati</taxon>
        <taxon>Pseudomonadota</taxon>
        <taxon>Gammaproteobacteria</taxon>
        <taxon>Pseudomonadales</taxon>
        <taxon>Pseudomonadaceae</taxon>
        <taxon>Pseudomonas</taxon>
        <taxon>Pseudomonas syringae</taxon>
    </lineage>
</organism>
<reference key="1">
    <citation type="journal article" date="2005" name="Proc. Natl. Acad. Sci. U.S.A.">
        <title>Comparison of the complete genome sequences of Pseudomonas syringae pv. syringae B728a and pv. tomato DC3000.</title>
        <authorList>
            <person name="Feil H."/>
            <person name="Feil W.S."/>
            <person name="Chain P."/>
            <person name="Larimer F."/>
            <person name="Dibartolo G."/>
            <person name="Copeland A."/>
            <person name="Lykidis A."/>
            <person name="Trong S."/>
            <person name="Nolan M."/>
            <person name="Goltsman E."/>
            <person name="Thiel J."/>
            <person name="Malfatti S."/>
            <person name="Loper J.E."/>
            <person name="Lapidus A."/>
            <person name="Detter J.C."/>
            <person name="Land M."/>
            <person name="Richardson P.M."/>
            <person name="Kyrpides N.C."/>
            <person name="Ivanova N."/>
            <person name="Lindow S.E."/>
        </authorList>
    </citation>
    <scope>NUCLEOTIDE SEQUENCE [LARGE SCALE GENOMIC DNA]</scope>
    <source>
        <strain>B728a</strain>
    </source>
</reference>
<proteinExistence type="inferred from homology"/>
<protein>
    <recommendedName>
        <fullName evidence="1">UDP-2,3-diacylglucosamine hydrolase</fullName>
        <ecNumber evidence="1">3.6.1.54</ecNumber>
    </recommendedName>
    <alternativeName>
        <fullName evidence="1">UDP-2,3-diacylglucosamine diphosphatase</fullName>
    </alternativeName>
</protein>
<feature type="chain" id="PRO_1000025075" description="UDP-2,3-diacylglucosamine hydrolase">
    <location>
        <begin position="1"/>
        <end position="248"/>
    </location>
</feature>
<feature type="binding site" evidence="1">
    <location>
        <position position="7"/>
    </location>
    <ligand>
        <name>Mn(2+)</name>
        <dbReference type="ChEBI" id="CHEBI:29035"/>
        <label>1</label>
    </ligand>
</feature>
<feature type="binding site" evidence="1">
    <location>
        <position position="9"/>
    </location>
    <ligand>
        <name>Mn(2+)</name>
        <dbReference type="ChEBI" id="CHEBI:29035"/>
        <label>1</label>
    </ligand>
</feature>
<feature type="binding site" evidence="1">
    <location>
        <position position="40"/>
    </location>
    <ligand>
        <name>Mn(2+)</name>
        <dbReference type="ChEBI" id="CHEBI:29035"/>
        <label>1</label>
    </ligand>
</feature>
<feature type="binding site" evidence="1">
    <location>
        <position position="40"/>
    </location>
    <ligand>
        <name>Mn(2+)</name>
        <dbReference type="ChEBI" id="CHEBI:29035"/>
        <label>2</label>
    </ligand>
</feature>
<feature type="binding site" evidence="1">
    <location>
        <begin position="78"/>
        <end position="79"/>
    </location>
    <ligand>
        <name>substrate</name>
    </ligand>
</feature>
<feature type="binding site" evidence="1">
    <location>
        <position position="78"/>
    </location>
    <ligand>
        <name>Mn(2+)</name>
        <dbReference type="ChEBI" id="CHEBI:29035"/>
        <label>2</label>
    </ligand>
</feature>
<feature type="binding site" evidence="1">
    <location>
        <position position="113"/>
    </location>
    <ligand>
        <name>Mn(2+)</name>
        <dbReference type="ChEBI" id="CHEBI:29035"/>
        <label>2</label>
    </ligand>
</feature>
<feature type="binding site" evidence="1">
    <location>
        <position position="121"/>
    </location>
    <ligand>
        <name>substrate</name>
    </ligand>
</feature>
<feature type="binding site" evidence="1">
    <location>
        <position position="159"/>
    </location>
    <ligand>
        <name>substrate</name>
    </ligand>
</feature>
<feature type="binding site" evidence="1">
    <location>
        <position position="163"/>
    </location>
    <ligand>
        <name>substrate</name>
    </ligand>
</feature>
<feature type="binding site" evidence="1">
    <location>
        <position position="166"/>
    </location>
    <ligand>
        <name>substrate</name>
    </ligand>
</feature>
<feature type="binding site" evidence="1">
    <location>
        <position position="194"/>
    </location>
    <ligand>
        <name>Mn(2+)</name>
        <dbReference type="ChEBI" id="CHEBI:29035"/>
        <label>2</label>
    </ligand>
</feature>
<feature type="binding site" evidence="1">
    <location>
        <position position="194"/>
    </location>
    <ligand>
        <name>substrate</name>
    </ligand>
</feature>
<feature type="binding site" evidence="1">
    <location>
        <position position="196"/>
    </location>
    <ligand>
        <name>Mn(2+)</name>
        <dbReference type="ChEBI" id="CHEBI:29035"/>
        <label>1</label>
    </ligand>
</feature>
<dbReference type="EC" id="3.6.1.54" evidence="1"/>
<dbReference type="EMBL" id="CP000075">
    <property type="protein sequence ID" value="AAY36780.1"/>
    <property type="molecule type" value="Genomic_DNA"/>
</dbReference>
<dbReference type="RefSeq" id="WP_011267205.1">
    <property type="nucleotide sequence ID" value="NC_007005.1"/>
</dbReference>
<dbReference type="RefSeq" id="YP_234818.1">
    <property type="nucleotide sequence ID" value="NC_007005.1"/>
</dbReference>
<dbReference type="SMR" id="Q4ZVP2"/>
<dbReference type="STRING" id="205918.Psyr_1732"/>
<dbReference type="KEGG" id="psb:Psyr_1732"/>
<dbReference type="PATRIC" id="fig|205918.7.peg.1771"/>
<dbReference type="eggNOG" id="COG2908">
    <property type="taxonomic scope" value="Bacteria"/>
</dbReference>
<dbReference type="HOGENOM" id="CLU_074586_0_0_6"/>
<dbReference type="OrthoDB" id="9783283at2"/>
<dbReference type="UniPathway" id="UPA00359">
    <property type="reaction ID" value="UER00480"/>
</dbReference>
<dbReference type="Proteomes" id="UP000000426">
    <property type="component" value="Chromosome"/>
</dbReference>
<dbReference type="GO" id="GO:0005737">
    <property type="term" value="C:cytoplasm"/>
    <property type="evidence" value="ECO:0007669"/>
    <property type="project" value="InterPro"/>
</dbReference>
<dbReference type="GO" id="GO:0019897">
    <property type="term" value="C:extrinsic component of plasma membrane"/>
    <property type="evidence" value="ECO:0007669"/>
    <property type="project" value="UniProtKB-UniRule"/>
</dbReference>
<dbReference type="GO" id="GO:0030145">
    <property type="term" value="F:manganese ion binding"/>
    <property type="evidence" value="ECO:0007669"/>
    <property type="project" value="UniProtKB-UniRule"/>
</dbReference>
<dbReference type="GO" id="GO:0008758">
    <property type="term" value="F:UDP-2,3-diacylglucosamine hydrolase activity"/>
    <property type="evidence" value="ECO:0007669"/>
    <property type="project" value="UniProtKB-UniRule"/>
</dbReference>
<dbReference type="GO" id="GO:0009245">
    <property type="term" value="P:lipid A biosynthetic process"/>
    <property type="evidence" value="ECO:0007669"/>
    <property type="project" value="UniProtKB-UniRule"/>
</dbReference>
<dbReference type="CDD" id="cd07398">
    <property type="entry name" value="MPP_YbbF-LpxH"/>
    <property type="match status" value="1"/>
</dbReference>
<dbReference type="Gene3D" id="3.60.21.10">
    <property type="match status" value="1"/>
</dbReference>
<dbReference type="HAMAP" id="MF_00575">
    <property type="entry name" value="LpxH"/>
    <property type="match status" value="1"/>
</dbReference>
<dbReference type="InterPro" id="IPR004843">
    <property type="entry name" value="Calcineurin-like_PHP_ApaH"/>
</dbReference>
<dbReference type="InterPro" id="IPR043461">
    <property type="entry name" value="LpxH-like"/>
</dbReference>
<dbReference type="InterPro" id="IPR029052">
    <property type="entry name" value="Metallo-depent_PP-like"/>
</dbReference>
<dbReference type="InterPro" id="IPR010138">
    <property type="entry name" value="UDP-diacylglucosamine_Hdrlase"/>
</dbReference>
<dbReference type="NCBIfam" id="TIGR01854">
    <property type="entry name" value="lipid_A_lpxH"/>
    <property type="match status" value="1"/>
</dbReference>
<dbReference type="NCBIfam" id="NF003743">
    <property type="entry name" value="PRK05340.1"/>
    <property type="match status" value="1"/>
</dbReference>
<dbReference type="PANTHER" id="PTHR34990:SF1">
    <property type="entry name" value="UDP-2,3-DIACYLGLUCOSAMINE HYDROLASE"/>
    <property type="match status" value="1"/>
</dbReference>
<dbReference type="PANTHER" id="PTHR34990">
    <property type="entry name" value="UDP-2,3-DIACYLGLUCOSAMINE HYDROLASE-RELATED"/>
    <property type="match status" value="1"/>
</dbReference>
<dbReference type="Pfam" id="PF00149">
    <property type="entry name" value="Metallophos"/>
    <property type="match status" value="1"/>
</dbReference>
<dbReference type="SUPFAM" id="SSF56300">
    <property type="entry name" value="Metallo-dependent phosphatases"/>
    <property type="match status" value="1"/>
</dbReference>
<gene>
    <name evidence="1" type="primary">lpxH</name>
    <name type="ordered locus">Psyr_1732</name>
</gene>
<keyword id="KW-0997">Cell inner membrane</keyword>
<keyword id="KW-1003">Cell membrane</keyword>
<keyword id="KW-0378">Hydrolase</keyword>
<keyword id="KW-0441">Lipid A biosynthesis</keyword>
<keyword id="KW-0444">Lipid biosynthesis</keyword>
<keyword id="KW-0443">Lipid metabolism</keyword>
<keyword id="KW-0464">Manganese</keyword>
<keyword id="KW-0472">Membrane</keyword>
<keyword id="KW-0479">Metal-binding</keyword>
<comment type="function">
    <text evidence="1">Hydrolyzes the pyrophosphate bond of UDP-2,3-diacylglucosamine to yield 2,3-diacylglucosamine 1-phosphate (lipid X) and UMP by catalyzing the attack of water at the alpha-P atom. Involved in the biosynthesis of lipid A, a phosphorylated glycolipid that anchors the lipopolysaccharide to the outer membrane of the cell.</text>
</comment>
<comment type="catalytic activity">
    <reaction evidence="1">
        <text>UDP-2-N,3-O-bis[(3R)-3-hydroxytetradecanoyl]-alpha-D-glucosamine + H2O = 2-N,3-O-bis[(3R)-3-hydroxytetradecanoyl]-alpha-D-glucosaminyl 1-phosphate + UMP + 2 H(+)</text>
        <dbReference type="Rhea" id="RHEA:25213"/>
        <dbReference type="ChEBI" id="CHEBI:15377"/>
        <dbReference type="ChEBI" id="CHEBI:15378"/>
        <dbReference type="ChEBI" id="CHEBI:57865"/>
        <dbReference type="ChEBI" id="CHEBI:57957"/>
        <dbReference type="ChEBI" id="CHEBI:78847"/>
        <dbReference type="EC" id="3.6.1.54"/>
    </reaction>
</comment>
<comment type="cofactor">
    <cofactor evidence="1">
        <name>Mn(2+)</name>
        <dbReference type="ChEBI" id="CHEBI:29035"/>
    </cofactor>
    <text evidence="1">Binds 2 Mn(2+) ions per subunit in a binuclear metal center.</text>
</comment>
<comment type="pathway">
    <text evidence="1">Glycolipid biosynthesis; lipid IV(A) biosynthesis; lipid IV(A) from (3R)-3-hydroxytetradecanoyl-[acyl-carrier-protein] and UDP-N-acetyl-alpha-D-glucosamine: step 4/6.</text>
</comment>
<comment type="subcellular location">
    <subcellularLocation>
        <location evidence="1">Cell inner membrane</location>
        <topology evidence="1">Peripheral membrane protein</topology>
        <orientation evidence="1">Cytoplasmic side</orientation>
    </subcellularLocation>
</comment>
<comment type="similarity">
    <text evidence="1">Belongs to the LpxH family.</text>
</comment>